<sequence length="220" mass="24920">MERHVLVVFPHPDDEAYAAGGTIRLLTDQGVPVTYACGTLGQMGRNMGKNVFANRETIPHIRKKELKDACEAMGIKDLRMLGFHDKTLEFEDVDFVADKIEAIIQEVNPSRIITFYPEHGVHPDHNAFGRAVVRAVSRMPKEERPVIHAVAITKNREAVLGEPDVVNNISEVFDHKLTALGAHRSQTEAMLEDTHAKIKNKDAATLKWLQLEQFWTYKWE</sequence>
<organism>
    <name type="scientific">Bacillus cereus (strain ATCC 14579 / DSM 31 / CCUG 7414 / JCM 2152 / NBRC 15305 / NCIMB 9373 / NCTC 2599 / NRRL B-3711)</name>
    <dbReference type="NCBI Taxonomy" id="226900"/>
    <lineage>
        <taxon>Bacteria</taxon>
        <taxon>Bacillati</taxon>
        <taxon>Bacillota</taxon>
        <taxon>Bacilli</taxon>
        <taxon>Bacillales</taxon>
        <taxon>Bacillaceae</taxon>
        <taxon>Bacillus</taxon>
        <taxon>Bacillus cereus group</taxon>
    </lineage>
</organism>
<accession>Q81AU5</accession>
<reference key="1">
    <citation type="journal article" date="2003" name="Nature">
        <title>Genome sequence of Bacillus cereus and comparative analysis with Bacillus anthracis.</title>
        <authorList>
            <person name="Ivanova N."/>
            <person name="Sorokin A."/>
            <person name="Anderson I."/>
            <person name="Galleron N."/>
            <person name="Candelon B."/>
            <person name="Kapatral V."/>
            <person name="Bhattacharyya A."/>
            <person name="Reznik G."/>
            <person name="Mikhailova N."/>
            <person name="Lapidus A."/>
            <person name="Chu L."/>
            <person name="Mazur M."/>
            <person name="Goltsman E."/>
            <person name="Larsen N."/>
            <person name="D'Souza M."/>
            <person name="Walunas T."/>
            <person name="Grechkin Y."/>
            <person name="Pusch G."/>
            <person name="Haselkorn R."/>
            <person name="Fonstein M."/>
            <person name="Ehrlich S.D."/>
            <person name="Overbeek R."/>
            <person name="Kyrpides N.C."/>
        </authorList>
    </citation>
    <scope>NUCLEOTIDE SEQUENCE [LARGE SCALE GENOMIC DNA]</scope>
    <source>
        <strain>ATCC 14579 / DSM 31 / CCUG 7414 / JCM 2152 / NBRC 15305 / NCIMB 9373 / NCTC 2599 / NRRL B-3711</strain>
    </source>
</reference>
<reference key="2">
    <citation type="journal article" date="2013" name="Biochem. J.">
        <title>Cross-functionalities of Bacillus deacetylases involved in bacillithiol biosynthesis and bacillithiol-S-conjugate detoxification pathways.</title>
        <authorList>
            <person name="Fang Z."/>
            <person name="Roberts A.A."/>
            <person name="Weidman K."/>
            <person name="Sharma S.V."/>
            <person name="Claiborne A."/>
            <person name="Hamilton C.J."/>
            <person name="Dos Santos P.C."/>
        </authorList>
    </citation>
    <scope>FUNCTION</scope>
    <scope>CATALYTIC ACTIVITY</scope>
    <scope>BIOPHYSICOCHEMICAL PROPERTIES</scope>
</reference>
<gene>
    <name evidence="3" type="primary">bshB2</name>
    <name evidence="3" type="synonym">bca</name>
    <name evidence="5" type="ordered locus">BC_3461</name>
</gene>
<proteinExistence type="evidence at protein level"/>
<name>BSHB2_BACCR</name>
<feature type="chain" id="PRO_0000433163" description="Probable N-acetyl-alpha-D-glucosaminyl L-malate deacetylase 2">
    <location>
        <begin position="1"/>
        <end position="220"/>
    </location>
</feature>
<feature type="binding site" evidence="1">
    <location>
        <position position="11"/>
    </location>
    <ligand>
        <name>Zn(2+)</name>
        <dbReference type="ChEBI" id="CHEBI:29105"/>
    </ligand>
</feature>
<feature type="binding site" evidence="1">
    <location>
        <position position="14"/>
    </location>
    <ligand>
        <name>Zn(2+)</name>
        <dbReference type="ChEBI" id="CHEBI:29105"/>
    </ligand>
</feature>
<feature type="binding site" evidence="1">
    <location>
        <position position="125"/>
    </location>
    <ligand>
        <name>Zn(2+)</name>
        <dbReference type="ChEBI" id="CHEBI:29105"/>
    </ligand>
</feature>
<evidence type="ECO:0000250" key="1">
    <source>
        <dbReference type="UniProtKB" id="Q81FP2"/>
    </source>
</evidence>
<evidence type="ECO:0000269" key="2">
    <source>
    </source>
</evidence>
<evidence type="ECO:0000303" key="3">
    <source>
    </source>
</evidence>
<evidence type="ECO:0000305" key="4"/>
<evidence type="ECO:0000312" key="5">
    <source>
        <dbReference type="EMBL" id="AAP10396.1"/>
    </source>
</evidence>
<protein>
    <recommendedName>
        <fullName evidence="4">Probable N-acetyl-alpha-D-glucosaminyl L-malate deacetylase 2</fullName>
        <shortName evidence="4">GlcNAc-Mal deacetylase 2</shortName>
        <ecNumber evidence="2">3.5.1.-</ecNumber>
    </recommendedName>
</protein>
<dbReference type="EC" id="3.5.1.-" evidence="2"/>
<dbReference type="EMBL" id="AE016877">
    <property type="protein sequence ID" value="AAP10396.1"/>
    <property type="molecule type" value="Genomic_DNA"/>
</dbReference>
<dbReference type="RefSeq" id="NP_833195.1">
    <property type="nucleotide sequence ID" value="NC_004722.1"/>
</dbReference>
<dbReference type="RefSeq" id="WP_000439483.1">
    <property type="nucleotide sequence ID" value="NZ_CP138336.1"/>
</dbReference>
<dbReference type="SMR" id="Q81AU5"/>
<dbReference type="STRING" id="226900.BC_3461"/>
<dbReference type="GeneID" id="72450112"/>
<dbReference type="KEGG" id="bce:BC3461"/>
<dbReference type="PATRIC" id="fig|226900.8.peg.3549"/>
<dbReference type="HOGENOM" id="CLU_049311_4_2_9"/>
<dbReference type="OrthoDB" id="9790023at2"/>
<dbReference type="SABIO-RK" id="Q81AU5"/>
<dbReference type="Proteomes" id="UP000001417">
    <property type="component" value="Chromosome"/>
</dbReference>
<dbReference type="GO" id="GO:0016811">
    <property type="term" value="F:hydrolase activity, acting on carbon-nitrogen (but not peptide) bonds, in linear amides"/>
    <property type="evidence" value="ECO:0000318"/>
    <property type="project" value="GO_Central"/>
</dbReference>
<dbReference type="GO" id="GO:0046872">
    <property type="term" value="F:metal ion binding"/>
    <property type="evidence" value="ECO:0007669"/>
    <property type="project" value="UniProtKB-KW"/>
</dbReference>
<dbReference type="Gene3D" id="3.40.50.10320">
    <property type="entry name" value="LmbE-like"/>
    <property type="match status" value="1"/>
</dbReference>
<dbReference type="InterPro" id="IPR023841">
    <property type="entry name" value="BshB2"/>
</dbReference>
<dbReference type="InterPro" id="IPR003737">
    <property type="entry name" value="GlcNAc_PI_deacetylase-related"/>
</dbReference>
<dbReference type="InterPro" id="IPR024078">
    <property type="entry name" value="LmbE-like_dom_sf"/>
</dbReference>
<dbReference type="NCBIfam" id="TIGR04000">
    <property type="entry name" value="thiol_BshB2"/>
    <property type="match status" value="1"/>
</dbReference>
<dbReference type="PANTHER" id="PTHR12993:SF27">
    <property type="entry name" value="N-ACETYL-ALPHA-D-GLUCOSAMINYL L-MALATE DEACETYLASE 2-RELATED"/>
    <property type="match status" value="1"/>
</dbReference>
<dbReference type="PANTHER" id="PTHR12993">
    <property type="entry name" value="N-ACETYLGLUCOSAMINYL-PHOSPHATIDYLINOSITOL DE-N-ACETYLASE-RELATED"/>
    <property type="match status" value="1"/>
</dbReference>
<dbReference type="Pfam" id="PF02585">
    <property type="entry name" value="PIG-L"/>
    <property type="match status" value="1"/>
</dbReference>
<dbReference type="SUPFAM" id="SSF102588">
    <property type="entry name" value="LmbE-like"/>
    <property type="match status" value="1"/>
</dbReference>
<comment type="function">
    <text evidence="2">Involved in bacillithiol (BSH) biosynthesis. Catalyzes the second step of the pathway, the deacetylation of N-acetylglucosaminylmalate (GlcNAc-Mal) to glucosamine malate (GlcN-Mal). Has weak activity compared with bshB1.</text>
</comment>
<comment type="catalytic activity">
    <reaction evidence="2">
        <text>(S)-malyl N-acetyl-alpha-D-glucosaminide + H2O = (S)-malyl alpha-D-glucosaminide + acetate</text>
        <dbReference type="Rhea" id="RHEA:33411"/>
        <dbReference type="ChEBI" id="CHEBI:15377"/>
        <dbReference type="ChEBI" id="CHEBI:30089"/>
        <dbReference type="ChEBI" id="CHEBI:64870"/>
        <dbReference type="ChEBI" id="CHEBI:64871"/>
    </reaction>
</comment>
<comment type="cofactor">
    <cofactor evidence="1">
        <name>Zn(2+)</name>
        <dbReference type="ChEBI" id="CHEBI:29105"/>
    </cofactor>
</comment>
<comment type="biophysicochemical properties">
    <kinetics>
        <KM evidence="2">0.21 mM for GlcNAc-Mal</KM>
        <text evidence="2">kcat is 0.068 sec(-1) with GlcNAc-Mal as substrate.</text>
    </kinetics>
</comment>
<comment type="similarity">
    <text evidence="4">Belongs to the PIGL family.</text>
</comment>
<keyword id="KW-0378">Hydrolase</keyword>
<keyword id="KW-0479">Metal-binding</keyword>
<keyword id="KW-1185">Reference proteome</keyword>
<keyword id="KW-0862">Zinc</keyword>